<protein>
    <recommendedName>
        <fullName evidence="1">Phosphoglycerate kinase</fullName>
        <ecNumber evidence="1">2.7.2.3</ecNumber>
    </recommendedName>
</protein>
<name>PGK_BIFLS</name>
<proteinExistence type="inferred from homology"/>
<feature type="chain" id="PRO_1000192802" description="Phosphoglycerate kinase">
    <location>
        <begin position="1"/>
        <end position="401"/>
    </location>
</feature>
<feature type="binding site" evidence="1">
    <location>
        <begin position="20"/>
        <end position="22"/>
    </location>
    <ligand>
        <name>substrate</name>
    </ligand>
</feature>
<feature type="binding site" evidence="1">
    <location>
        <position position="35"/>
    </location>
    <ligand>
        <name>substrate</name>
    </ligand>
</feature>
<feature type="binding site" evidence="1">
    <location>
        <begin position="58"/>
        <end position="61"/>
    </location>
    <ligand>
        <name>substrate</name>
    </ligand>
</feature>
<feature type="binding site" evidence="1">
    <location>
        <position position="117"/>
    </location>
    <ligand>
        <name>substrate</name>
    </ligand>
</feature>
<feature type="binding site" evidence="1">
    <location>
        <position position="154"/>
    </location>
    <ligand>
        <name>substrate</name>
    </ligand>
</feature>
<feature type="binding site" evidence="1">
    <location>
        <position position="204"/>
    </location>
    <ligand>
        <name>ATP</name>
        <dbReference type="ChEBI" id="CHEBI:30616"/>
    </ligand>
</feature>
<feature type="binding site" evidence="1">
    <location>
        <position position="298"/>
    </location>
    <ligand>
        <name>ATP</name>
        <dbReference type="ChEBI" id="CHEBI:30616"/>
    </ligand>
</feature>
<feature type="binding site" evidence="1">
    <location>
        <position position="329"/>
    </location>
    <ligand>
        <name>ATP</name>
        <dbReference type="ChEBI" id="CHEBI:30616"/>
    </ligand>
</feature>
<feature type="binding site" evidence="1">
    <location>
        <begin position="358"/>
        <end position="361"/>
    </location>
    <ligand>
        <name>ATP</name>
        <dbReference type="ChEBI" id="CHEBI:30616"/>
    </ligand>
</feature>
<gene>
    <name evidence="1" type="primary">pgk</name>
    <name type="ordered locus">Blon_1087</name>
    <name type="ordered locus">BLIJ_1111</name>
</gene>
<sequence length="401" mass="41896">MKTLKDLGDLKGKRVLVRADFNVPLDGTTITDDGRIKAALPTIKTLREEGAKVILMAHLGRPKGKVVPELSLAPVAARLGELLGTNVPLAKDTYGEDAQAKVAAMNDGDVVLLENVRFNPEETSKDADERAAYAKKIAALGEAFVSDGFGVVHRAQGSNYDVAADLPAAAGLLVEKEVKALSKATENPERPFTVVLGGSKVSDKLGVIENLLDKANRLVIGGGMVFTFLKAKGYEVGTSLLEEDQLEKVKGYIETAEKNGVELVLPTDVVVNAGFPAGDTPVAPEVVAADAIPADKMGLDIGPESQKLFHDKIVDSKTVVWNGPMGVFEVPEFAAGTKAVAQGLVDATAAGAFTIVGGGDSASAVRNLGFPEDGFSHISTGGGASLEFLEGKELPGLKVLE</sequence>
<reference key="1">
    <citation type="journal article" date="2008" name="Proc. Natl. Acad. Sci. U.S.A.">
        <title>The genome sequence of Bifidobacterium longum subsp. infantis reveals adaptations for milk utilization within the infant microbiome.</title>
        <authorList>
            <person name="Sela D.A."/>
            <person name="Chapman J."/>
            <person name="Adeuya A."/>
            <person name="Kim J.H."/>
            <person name="Chen F."/>
            <person name="Whitehead T.R."/>
            <person name="Lapidus A."/>
            <person name="Rokhsar D.S."/>
            <person name="Lebrilla C.B."/>
            <person name="German J.B."/>
            <person name="Price N.P."/>
            <person name="Richardson P.M."/>
            <person name="Mills D.A."/>
        </authorList>
    </citation>
    <scope>NUCLEOTIDE SEQUENCE [LARGE SCALE GENOMIC DNA]</scope>
    <source>
        <strain>ATCC 15697 / DSM 20088 / JCM 1222 / NCTC 11817 / S12</strain>
    </source>
</reference>
<reference key="2">
    <citation type="journal article" date="2011" name="Nature">
        <title>Bifidobacteria can protect from enteropathogenic infection through production of acetate.</title>
        <authorList>
            <person name="Fukuda S."/>
            <person name="Toh H."/>
            <person name="Hase K."/>
            <person name="Oshima K."/>
            <person name="Nakanishi Y."/>
            <person name="Yoshimura K."/>
            <person name="Tobe T."/>
            <person name="Clarke J.M."/>
            <person name="Topping D.L."/>
            <person name="Suzuki T."/>
            <person name="Taylor T.D."/>
            <person name="Itoh K."/>
            <person name="Kikuchi J."/>
            <person name="Morita H."/>
            <person name="Hattori M."/>
            <person name="Ohno H."/>
        </authorList>
    </citation>
    <scope>NUCLEOTIDE SEQUENCE [LARGE SCALE GENOMIC DNA]</scope>
    <source>
        <strain>ATCC 15697 / DSM 20088 / JCM 1222 / NCTC 11817 / S12</strain>
    </source>
</reference>
<keyword id="KW-0067">ATP-binding</keyword>
<keyword id="KW-0963">Cytoplasm</keyword>
<keyword id="KW-0324">Glycolysis</keyword>
<keyword id="KW-0418">Kinase</keyword>
<keyword id="KW-0547">Nucleotide-binding</keyword>
<keyword id="KW-0808">Transferase</keyword>
<evidence type="ECO:0000255" key="1">
    <source>
        <dbReference type="HAMAP-Rule" id="MF_00145"/>
    </source>
</evidence>
<evidence type="ECO:0000305" key="2"/>
<dbReference type="EC" id="2.7.2.3" evidence="1"/>
<dbReference type="EMBL" id="CP001095">
    <property type="protein sequence ID" value="ACJ52177.1"/>
    <property type="molecule type" value="Genomic_DNA"/>
</dbReference>
<dbReference type="EMBL" id="AP010889">
    <property type="protein sequence ID" value="BAJ68699.1"/>
    <property type="status" value="ALT_INIT"/>
    <property type="molecule type" value="Genomic_DNA"/>
</dbReference>
<dbReference type="RefSeq" id="WP_012577436.1">
    <property type="nucleotide sequence ID" value="NZ_JDTT01000017.1"/>
</dbReference>
<dbReference type="SMR" id="B7GQU7"/>
<dbReference type="KEGG" id="bln:Blon_1087"/>
<dbReference type="KEGG" id="blon:BLIJ_1111"/>
<dbReference type="PATRIC" id="fig|391904.8.peg.1110"/>
<dbReference type="HOGENOM" id="CLU_025427_0_2_11"/>
<dbReference type="UniPathway" id="UPA00109">
    <property type="reaction ID" value="UER00185"/>
</dbReference>
<dbReference type="Proteomes" id="UP000001360">
    <property type="component" value="Chromosome"/>
</dbReference>
<dbReference type="GO" id="GO:0005829">
    <property type="term" value="C:cytosol"/>
    <property type="evidence" value="ECO:0007669"/>
    <property type="project" value="TreeGrafter"/>
</dbReference>
<dbReference type="GO" id="GO:0043531">
    <property type="term" value="F:ADP binding"/>
    <property type="evidence" value="ECO:0007669"/>
    <property type="project" value="TreeGrafter"/>
</dbReference>
<dbReference type="GO" id="GO:0005524">
    <property type="term" value="F:ATP binding"/>
    <property type="evidence" value="ECO:0007669"/>
    <property type="project" value="UniProtKB-KW"/>
</dbReference>
<dbReference type="GO" id="GO:0004618">
    <property type="term" value="F:phosphoglycerate kinase activity"/>
    <property type="evidence" value="ECO:0007669"/>
    <property type="project" value="UniProtKB-UniRule"/>
</dbReference>
<dbReference type="GO" id="GO:0006094">
    <property type="term" value="P:gluconeogenesis"/>
    <property type="evidence" value="ECO:0007669"/>
    <property type="project" value="TreeGrafter"/>
</dbReference>
<dbReference type="GO" id="GO:0006096">
    <property type="term" value="P:glycolytic process"/>
    <property type="evidence" value="ECO:0007669"/>
    <property type="project" value="UniProtKB-UniRule"/>
</dbReference>
<dbReference type="CDD" id="cd00318">
    <property type="entry name" value="Phosphoglycerate_kinase"/>
    <property type="match status" value="1"/>
</dbReference>
<dbReference type="FunFam" id="3.40.50.1260:FF:000003">
    <property type="entry name" value="Phosphoglycerate kinase"/>
    <property type="match status" value="1"/>
</dbReference>
<dbReference type="FunFam" id="3.40.50.1260:FF:000006">
    <property type="entry name" value="Phosphoglycerate kinase"/>
    <property type="match status" value="1"/>
</dbReference>
<dbReference type="Gene3D" id="3.40.50.1260">
    <property type="entry name" value="Phosphoglycerate kinase, N-terminal domain"/>
    <property type="match status" value="2"/>
</dbReference>
<dbReference type="HAMAP" id="MF_00145">
    <property type="entry name" value="Phosphoglyc_kinase"/>
    <property type="match status" value="1"/>
</dbReference>
<dbReference type="InterPro" id="IPR001576">
    <property type="entry name" value="Phosphoglycerate_kinase"/>
</dbReference>
<dbReference type="InterPro" id="IPR015911">
    <property type="entry name" value="Phosphoglycerate_kinase_CS"/>
</dbReference>
<dbReference type="InterPro" id="IPR015824">
    <property type="entry name" value="Phosphoglycerate_kinase_N"/>
</dbReference>
<dbReference type="InterPro" id="IPR036043">
    <property type="entry name" value="Phosphoglycerate_kinase_sf"/>
</dbReference>
<dbReference type="PANTHER" id="PTHR11406">
    <property type="entry name" value="PHOSPHOGLYCERATE KINASE"/>
    <property type="match status" value="1"/>
</dbReference>
<dbReference type="PANTHER" id="PTHR11406:SF23">
    <property type="entry name" value="PHOSPHOGLYCERATE KINASE 1, CHLOROPLASTIC-RELATED"/>
    <property type="match status" value="1"/>
</dbReference>
<dbReference type="Pfam" id="PF00162">
    <property type="entry name" value="PGK"/>
    <property type="match status" value="1"/>
</dbReference>
<dbReference type="PIRSF" id="PIRSF000724">
    <property type="entry name" value="Pgk"/>
    <property type="match status" value="1"/>
</dbReference>
<dbReference type="PRINTS" id="PR00477">
    <property type="entry name" value="PHGLYCKINASE"/>
</dbReference>
<dbReference type="SUPFAM" id="SSF53748">
    <property type="entry name" value="Phosphoglycerate kinase"/>
    <property type="match status" value="1"/>
</dbReference>
<dbReference type="PROSITE" id="PS00111">
    <property type="entry name" value="PGLYCERATE_KINASE"/>
    <property type="match status" value="1"/>
</dbReference>
<organism>
    <name type="scientific">Bifidobacterium longum subsp. infantis (strain ATCC 15697 / DSM 20088 / JCM 1222 / NCTC 11817 / S12)</name>
    <dbReference type="NCBI Taxonomy" id="391904"/>
    <lineage>
        <taxon>Bacteria</taxon>
        <taxon>Bacillati</taxon>
        <taxon>Actinomycetota</taxon>
        <taxon>Actinomycetes</taxon>
        <taxon>Bifidobacteriales</taxon>
        <taxon>Bifidobacteriaceae</taxon>
        <taxon>Bifidobacterium</taxon>
    </lineage>
</organism>
<comment type="catalytic activity">
    <reaction evidence="1">
        <text>(2R)-3-phosphoglycerate + ATP = (2R)-3-phospho-glyceroyl phosphate + ADP</text>
        <dbReference type="Rhea" id="RHEA:14801"/>
        <dbReference type="ChEBI" id="CHEBI:30616"/>
        <dbReference type="ChEBI" id="CHEBI:57604"/>
        <dbReference type="ChEBI" id="CHEBI:58272"/>
        <dbReference type="ChEBI" id="CHEBI:456216"/>
        <dbReference type="EC" id="2.7.2.3"/>
    </reaction>
</comment>
<comment type="pathway">
    <text evidence="1">Carbohydrate degradation; glycolysis; pyruvate from D-glyceraldehyde 3-phosphate: step 2/5.</text>
</comment>
<comment type="subunit">
    <text evidence="1">Monomer.</text>
</comment>
<comment type="subcellular location">
    <subcellularLocation>
        <location evidence="1">Cytoplasm</location>
    </subcellularLocation>
</comment>
<comment type="similarity">
    <text evidence="1">Belongs to the phosphoglycerate kinase family.</text>
</comment>
<comment type="sequence caution" evidence="2">
    <conflict type="erroneous initiation">
        <sequence resource="EMBL-CDS" id="BAJ68699"/>
    </conflict>
    <text>Extended N-terminus.</text>
</comment>
<accession>B7GQU7</accession>
<accession>E8MJH2</accession>